<accession>C6CAI2</accession>
<protein>
    <recommendedName>
        <fullName evidence="1">Multidrug resistance protein MdtB</fullName>
    </recommendedName>
    <alternativeName>
        <fullName evidence="1">Multidrug transporter MdtB</fullName>
    </alternativeName>
</protein>
<keyword id="KW-0997">Cell inner membrane</keyword>
<keyword id="KW-1003">Cell membrane</keyword>
<keyword id="KW-0472">Membrane</keyword>
<keyword id="KW-0812">Transmembrane</keyword>
<keyword id="KW-1133">Transmembrane helix</keyword>
<keyword id="KW-0813">Transport</keyword>
<feature type="chain" id="PRO_0000414029" description="Multidrug resistance protein MdtB">
    <location>
        <begin position="1"/>
        <end position="1040"/>
    </location>
</feature>
<feature type="transmembrane region" description="Helical" evidence="1">
    <location>
        <begin position="16"/>
        <end position="36"/>
    </location>
</feature>
<feature type="transmembrane region" description="Helical" evidence="1">
    <location>
        <begin position="342"/>
        <end position="362"/>
    </location>
</feature>
<feature type="transmembrane region" description="Helical" evidence="1">
    <location>
        <begin position="373"/>
        <end position="393"/>
    </location>
</feature>
<feature type="transmembrane region" description="Helical" evidence="1">
    <location>
        <begin position="396"/>
        <end position="416"/>
    </location>
</feature>
<feature type="transmembrane region" description="Helical" evidence="1">
    <location>
        <begin position="440"/>
        <end position="460"/>
    </location>
</feature>
<feature type="transmembrane region" description="Helical" evidence="1">
    <location>
        <begin position="472"/>
        <end position="492"/>
    </location>
</feature>
<feature type="transmembrane region" description="Helical" evidence="1">
    <location>
        <begin position="537"/>
        <end position="557"/>
    </location>
</feature>
<feature type="transmembrane region" description="Helical" evidence="1">
    <location>
        <begin position="865"/>
        <end position="885"/>
    </location>
</feature>
<feature type="transmembrane region" description="Helical" evidence="1">
    <location>
        <begin position="888"/>
        <end position="908"/>
    </location>
</feature>
<feature type="transmembrane region" description="Helical" evidence="1">
    <location>
        <begin position="911"/>
        <end position="931"/>
    </location>
</feature>
<feature type="transmembrane region" description="Helical" evidence="1">
    <location>
        <begin position="968"/>
        <end position="988"/>
    </location>
</feature>
<feature type="transmembrane region" description="Helical" evidence="1">
    <location>
        <begin position="1002"/>
        <end position="1022"/>
    </location>
</feature>
<gene>
    <name evidence="1" type="primary">mdtB</name>
    <name type="ordered locus">Dd703_2703</name>
</gene>
<organism>
    <name type="scientific">Musicola paradisiaca (strain Ech703)</name>
    <name type="common">Dickeya paradisiaca</name>
    <name type="synonym">Dickeya dadantii</name>
    <dbReference type="NCBI Taxonomy" id="579405"/>
    <lineage>
        <taxon>Bacteria</taxon>
        <taxon>Pseudomonadati</taxon>
        <taxon>Pseudomonadota</taxon>
        <taxon>Gammaproteobacteria</taxon>
        <taxon>Enterobacterales</taxon>
        <taxon>Pectobacteriaceae</taxon>
        <taxon>Musicola</taxon>
    </lineage>
</organism>
<reference key="1">
    <citation type="submission" date="2009-06" db="EMBL/GenBank/DDBJ databases">
        <title>Complete sequence of Dickeya dadantii Ech703.</title>
        <authorList>
            <consortium name="US DOE Joint Genome Institute"/>
            <person name="Lucas S."/>
            <person name="Copeland A."/>
            <person name="Lapidus A."/>
            <person name="Glavina del Rio T."/>
            <person name="Dalin E."/>
            <person name="Tice H."/>
            <person name="Bruce D."/>
            <person name="Goodwin L."/>
            <person name="Pitluck S."/>
            <person name="Chertkov O."/>
            <person name="Brettin T."/>
            <person name="Detter J.C."/>
            <person name="Han C."/>
            <person name="Larimer F."/>
            <person name="Land M."/>
            <person name="Hauser L."/>
            <person name="Kyrpides N."/>
            <person name="Mikhailova N."/>
            <person name="Balakrishnan V."/>
            <person name="Glasner J."/>
            <person name="Perna N.T."/>
        </authorList>
    </citation>
    <scope>NUCLEOTIDE SEQUENCE [LARGE SCALE GENOMIC DNA]</scope>
    <source>
        <strain>Ech703</strain>
    </source>
</reference>
<sequence length="1040" mass="112391">MQESSPIHGGGPSRLFILRPVATTLLMVAILLAGLVGYRALPVSALPEVDYPTIQVVTLYPGASPDVMTSSVTAPLEHQFGSMSGLKQMSSQSSAGASVITLQFQLTLSLDVAEQDVQAAINAATNLLPTDLPFPPTYNKVNPADPPIMTLAVTSTAMPMTQVQDMLETRIAQKISQVEGVGLVTLAGGQRPSVRVKLNAGALASFGLSSESVRTAITAANVNTPKGSFDGPTRSVTLSANDQIRSVDDYRQLIITWKNNAPVRLQDVATVEQAPENTKLAAWANQNQAIILNIQRQPGANVIATADHIRNLLPTLQASLPKSVNVTLLADRTTTIRASVDDVQFELLLAIALVVMVIYLFLRNAVATLIPSIAVPLSLVGTFAAMYFLGFSVNNLTLMALTIATGFVVDDAIVVIENIARYIEKGEKPLDAALKGAGEIGFTIISLTFSLIAVLIPLLFMGDIIGRLFREFAVTLAVSILISAIVSLTLTPMMCARLLNHEALAHQNRFTRASERFFDWVIAAYGRGLTRVLSHPWITLSVAIGTLVLTVLLYIVIPKGFFPIQDNGIIQGTVQAAQTISFNSMVDKQHQVTDAILKDPTVESVSSFIGVDGTNPSLNSGRLQINLKPFSERSERVQTIIDRLQQQAAAIPGVQLYLQPVQDLTIDTQVSRTQYQFTLQTMSLDELGVWVPKLTAELQKLPQLQDVSSDWQDGAAVAYVKVDRDNASRLGITMSQIDSALYNAFGQRLISTIYTQSNQYRVVLEQHSPNKTGLDPLHDIRLVNSTGGVVPLDSIATIEERNGTLAVNHIDQFPSSTISFNVAPGYALGDAVKAIETTQQQMQLPSDIITRFQGSTLAFQAALTSTIWLVVAAIVAMYIVLGVLYESFIHPVTILSTLPTAGVGALLALMISGSDLNIIAIIGIILLIGIVKKNAIMMIDFALAAEREHGMSPYQAIYQACLLRFRPILMTTMAALLSAVPLMFSTGVGAELRRPLGICMVGGLVMSQVLTLFTTPVIYLLFDRLAHRLRRPRPQEGEAQ</sequence>
<comment type="subunit">
    <text evidence="1">Part of a tripartite efflux system composed of MdtA, MdtB and MdtC. MdtB forms a heteromultimer with MdtC.</text>
</comment>
<comment type="subcellular location">
    <subcellularLocation>
        <location evidence="1">Cell inner membrane</location>
        <topology evidence="1">Multi-pass membrane protein</topology>
    </subcellularLocation>
</comment>
<comment type="similarity">
    <text evidence="1">Belongs to the resistance-nodulation-cell division (RND) (TC 2.A.6) family. MdtB subfamily.</text>
</comment>
<proteinExistence type="inferred from homology"/>
<evidence type="ECO:0000255" key="1">
    <source>
        <dbReference type="HAMAP-Rule" id="MF_01423"/>
    </source>
</evidence>
<dbReference type="EMBL" id="CP001654">
    <property type="protein sequence ID" value="ACS86480.1"/>
    <property type="molecule type" value="Genomic_DNA"/>
</dbReference>
<dbReference type="RefSeq" id="WP_015854385.1">
    <property type="nucleotide sequence ID" value="NC_012880.1"/>
</dbReference>
<dbReference type="SMR" id="C6CAI2"/>
<dbReference type="STRING" id="579405.Dd703_2703"/>
<dbReference type="KEGG" id="dda:Dd703_2703"/>
<dbReference type="eggNOG" id="COG0841">
    <property type="taxonomic scope" value="Bacteria"/>
</dbReference>
<dbReference type="HOGENOM" id="CLU_002755_1_2_6"/>
<dbReference type="Proteomes" id="UP000002734">
    <property type="component" value="Chromosome"/>
</dbReference>
<dbReference type="GO" id="GO:0005886">
    <property type="term" value="C:plasma membrane"/>
    <property type="evidence" value="ECO:0007669"/>
    <property type="project" value="UniProtKB-SubCell"/>
</dbReference>
<dbReference type="GO" id="GO:0042910">
    <property type="term" value="F:xenobiotic transmembrane transporter activity"/>
    <property type="evidence" value="ECO:0007669"/>
    <property type="project" value="TreeGrafter"/>
</dbReference>
<dbReference type="FunFam" id="1.20.1640.10:FF:000001">
    <property type="entry name" value="Efflux pump membrane transporter"/>
    <property type="match status" value="1"/>
</dbReference>
<dbReference type="FunFam" id="3.30.70.1430:FF:000001">
    <property type="entry name" value="Efflux pump membrane transporter"/>
    <property type="match status" value="1"/>
</dbReference>
<dbReference type="Gene3D" id="3.30.70.1430">
    <property type="entry name" value="Multidrug efflux transporter AcrB pore domain"/>
    <property type="match status" value="2"/>
</dbReference>
<dbReference type="Gene3D" id="3.30.70.1440">
    <property type="entry name" value="Multidrug efflux transporter AcrB pore domain"/>
    <property type="match status" value="1"/>
</dbReference>
<dbReference type="Gene3D" id="3.30.70.1320">
    <property type="entry name" value="Multidrug efflux transporter AcrB pore domain like"/>
    <property type="match status" value="1"/>
</dbReference>
<dbReference type="Gene3D" id="3.30.2090.10">
    <property type="entry name" value="Multidrug efflux transporter AcrB TolC docking domain, DN and DC subdomains"/>
    <property type="match status" value="2"/>
</dbReference>
<dbReference type="Gene3D" id="1.20.1640.10">
    <property type="entry name" value="Multidrug efflux transporter AcrB transmembrane domain"/>
    <property type="match status" value="2"/>
</dbReference>
<dbReference type="HAMAP" id="MF_01423">
    <property type="entry name" value="MdtB"/>
    <property type="match status" value="1"/>
</dbReference>
<dbReference type="InterPro" id="IPR027463">
    <property type="entry name" value="AcrB_DN_DC_subdom"/>
</dbReference>
<dbReference type="InterPro" id="IPR001036">
    <property type="entry name" value="Acrflvin-R"/>
</dbReference>
<dbReference type="InterPro" id="IPR022831">
    <property type="entry name" value="Multidrug-R_MdtB"/>
</dbReference>
<dbReference type="NCBIfam" id="NF007798">
    <property type="entry name" value="PRK10503.1"/>
    <property type="match status" value="1"/>
</dbReference>
<dbReference type="NCBIfam" id="NF033617">
    <property type="entry name" value="RND_permease_2"/>
    <property type="match status" value="1"/>
</dbReference>
<dbReference type="PANTHER" id="PTHR32063">
    <property type="match status" value="1"/>
</dbReference>
<dbReference type="PANTHER" id="PTHR32063:SF21">
    <property type="entry name" value="MULTIDRUG RESISTANCE PROTEIN MDTB"/>
    <property type="match status" value="1"/>
</dbReference>
<dbReference type="Pfam" id="PF00873">
    <property type="entry name" value="ACR_tran"/>
    <property type="match status" value="1"/>
</dbReference>
<dbReference type="PRINTS" id="PR00702">
    <property type="entry name" value="ACRIFLAVINRP"/>
</dbReference>
<dbReference type="SUPFAM" id="SSF82693">
    <property type="entry name" value="Multidrug efflux transporter AcrB pore domain, PN1, PN2, PC1 and PC2 subdomains"/>
    <property type="match status" value="3"/>
</dbReference>
<dbReference type="SUPFAM" id="SSF82714">
    <property type="entry name" value="Multidrug efflux transporter AcrB TolC docking domain, DN and DC subdomains"/>
    <property type="match status" value="2"/>
</dbReference>
<dbReference type="SUPFAM" id="SSF82866">
    <property type="entry name" value="Multidrug efflux transporter AcrB transmembrane domain"/>
    <property type="match status" value="2"/>
</dbReference>
<name>MDTB_MUSP7</name>